<feature type="chain" id="PRO_0000090166" description="Triosephosphate isomerase">
    <location>
        <begin position="1"/>
        <end position="249"/>
    </location>
</feature>
<feature type="active site" description="Electrophile" evidence="1">
    <location>
        <position position="94"/>
    </location>
</feature>
<feature type="active site" description="Proton acceptor" evidence="1">
    <location>
        <position position="166"/>
    </location>
</feature>
<feature type="binding site" evidence="1">
    <location>
        <position position="10"/>
    </location>
    <ligand>
        <name>substrate</name>
    </ligand>
</feature>
<feature type="binding site" evidence="1">
    <location>
        <position position="12"/>
    </location>
    <ligand>
        <name>substrate</name>
    </ligand>
</feature>
<feature type="sequence conflict" description="In Ref. 1; AAK71466/AAP02959." evidence="3" ref="1">
    <original>I</original>
    <variation>T</variation>
    <location>
        <position position="205"/>
    </location>
</feature>
<feature type="sequence conflict" description="In Ref. 1; AAK71466/AAP02959." evidence="3" ref="1">
    <original>N</original>
    <variation>S</variation>
    <location>
        <position position="216"/>
    </location>
</feature>
<accession>Q96VN5</accession>
<accession>C1GVB2</accession>
<accession>Q870F0</accession>
<comment type="catalytic activity">
    <reaction>
        <text>D-glyceraldehyde 3-phosphate = dihydroxyacetone phosphate</text>
        <dbReference type="Rhea" id="RHEA:18585"/>
        <dbReference type="ChEBI" id="CHEBI:57642"/>
        <dbReference type="ChEBI" id="CHEBI:59776"/>
        <dbReference type="EC" id="5.3.1.1"/>
    </reaction>
</comment>
<comment type="pathway">
    <text>Carbohydrate biosynthesis; gluconeogenesis.</text>
</comment>
<comment type="pathway">
    <text>Carbohydrate degradation; glycolysis; D-glyceraldehyde 3-phosphate from glycerone phosphate: step 1/1.</text>
</comment>
<comment type="subunit">
    <text evidence="1">Homodimer.</text>
</comment>
<comment type="induction">
    <text evidence="2">Preferentially expressed in yeast cells, the host parasitic phase.</text>
</comment>
<comment type="PTM">
    <text>The N-terminus is blocked.</text>
</comment>
<comment type="similarity">
    <text evidence="3">Belongs to the triosephosphate isomerase family.</text>
</comment>
<comment type="sequence caution" evidence="3">
    <conflict type="erroneous gene model prediction">
        <sequence resource="EMBL-CDS" id="EEH40530"/>
    </conflict>
</comment>
<reference key="1">
    <citation type="journal article" date="2004" name="Microbes Infect.">
        <title>Proteomic identification, nucleotide sequence, heterologous expression and immunological reactivity of the triosephosphate isomerase of Paracoccidioides brasiliensis.</title>
        <authorList>
            <person name="Pereira L.A."/>
            <person name="Pereira M."/>
            <person name="Felipe M.S.S."/>
            <person name="Zancope-Oliveira R.M."/>
            <person name="de Almeida Soares C.M."/>
        </authorList>
    </citation>
    <scope>NUCLEOTIDE SEQUENCE [GENOMIC DNA / MRNA]</scope>
    <scope>PROTEIN SEQUENCE OF 87-97; 144-158 AND 161-175</scope>
</reference>
<reference key="2">
    <citation type="journal article" date="2011" name="PLoS Genet.">
        <title>Comparative genomic analysis of human fungal pathogens causing paracoccidioidomycosis.</title>
        <authorList>
            <person name="Desjardins C.A."/>
            <person name="Champion M.D."/>
            <person name="Holder J.W."/>
            <person name="Muszewska A."/>
            <person name="Goldberg J."/>
            <person name="Bailao A.M."/>
            <person name="Brigido M.M."/>
            <person name="Ferreira M.E."/>
            <person name="Garcia A.M."/>
            <person name="Grynberg M."/>
            <person name="Gujja S."/>
            <person name="Heiman D.I."/>
            <person name="Henn M.R."/>
            <person name="Kodira C.D."/>
            <person name="Leon-Narvaez H."/>
            <person name="Longo L.V.G."/>
            <person name="Ma L.-J."/>
            <person name="Malavazi I."/>
            <person name="Matsuo A.L."/>
            <person name="Morais F.V."/>
            <person name="Pereira M."/>
            <person name="Rodriguez-Brito S."/>
            <person name="Sakthikumar S."/>
            <person name="Salem-Izacc S.M."/>
            <person name="Sykes S.M."/>
            <person name="Teixeira M.M."/>
            <person name="Vallejo M.C."/>
            <person name="Walter M.E."/>
            <person name="Yandava C."/>
            <person name="Young S."/>
            <person name="Zeng Q."/>
            <person name="Zucker J."/>
            <person name="Felipe M.S."/>
            <person name="Goldman G.H."/>
            <person name="Haas B.J."/>
            <person name="McEwen J.G."/>
            <person name="Nino-Vega G."/>
            <person name="Puccia R."/>
            <person name="San-Blas G."/>
            <person name="Soares C.M."/>
            <person name="Birren B.W."/>
            <person name="Cuomo C.A."/>
        </authorList>
    </citation>
    <scope>NUCLEOTIDE SEQUENCE [LARGE SCALE GENOMIC DNA]</scope>
    <source>
        <strain>ATCC MYA-826 / Pb01</strain>
    </source>
</reference>
<reference key="3">
    <citation type="journal article" date="2001" name="Microbes Infect.">
        <title>Two-dimensional electrophoresis and characterization of antigens from Paracoccidioides brasiliensis.</title>
        <authorList>
            <person name="da Fonseca C.A."/>
            <person name="Jesuino R.S.A."/>
            <person name="Felipe M.S.S."/>
            <person name="Cunha D.A."/>
            <person name="Brito W.A."/>
            <person name="de Almeida Soares C.M."/>
        </authorList>
    </citation>
    <scope>PROTEIN SEQUENCE OF 161-175</scope>
    <scope>INDUCTION</scope>
</reference>
<protein>
    <recommendedName>
        <fullName>Triosephosphate isomerase</fullName>
        <shortName>TIM</shortName>
        <ecNumber>5.3.1.1</ecNumber>
    </recommendedName>
    <alternativeName>
        <fullName>Triose-phosphate isomerase</fullName>
    </alternativeName>
</protein>
<gene>
    <name type="primary">TPI1</name>
    <name type="synonym">TPI</name>
    <name type="ORF">PAAG_02585</name>
</gene>
<keyword id="KW-0903">Direct protein sequencing</keyword>
<keyword id="KW-0312">Gluconeogenesis</keyword>
<keyword id="KW-0324">Glycolysis</keyword>
<keyword id="KW-0413">Isomerase</keyword>
<keyword id="KW-1185">Reference proteome</keyword>
<name>TPIS_PARBA</name>
<proteinExistence type="evidence at protein level"/>
<evidence type="ECO:0000250" key="1"/>
<evidence type="ECO:0000269" key="2">
    <source>
    </source>
</evidence>
<evidence type="ECO:0000305" key="3"/>
<sequence>MPRKFFVGGNFKMNGTAKSITHIITNLNSAKLDPSTEIVIAPPAIYLVLARQLANGQVAVSAQNVFDKPNGAFTGELSVEQLRDEKITWTLAGHSERRVLLREDDEFVARKTKAAINGGLNVILCIGESLEEREAGKTIDVVTRQLDAVAEEVSPAEWNKVVIAYEPIWAIGTGKVATTEQAQEVHASIRKWLNEKISPEAAENIRVIYGGSVTENNCRDLAAQPDVDGFLVGGASLKPAFVDIINARL</sequence>
<organism>
    <name type="scientific">Paracoccidioides lutzii (strain ATCC MYA-826 / Pb01)</name>
    <name type="common">Paracoccidioides brasiliensis</name>
    <dbReference type="NCBI Taxonomy" id="502779"/>
    <lineage>
        <taxon>Eukaryota</taxon>
        <taxon>Fungi</taxon>
        <taxon>Dikarya</taxon>
        <taxon>Ascomycota</taxon>
        <taxon>Pezizomycotina</taxon>
        <taxon>Eurotiomycetes</taxon>
        <taxon>Eurotiomycetidae</taxon>
        <taxon>Onygenales</taxon>
        <taxon>Ajellomycetaceae</taxon>
        <taxon>Paracoccidioides</taxon>
    </lineage>
</organism>
<dbReference type="EC" id="5.3.1.1"/>
<dbReference type="EMBL" id="AY037936">
    <property type="protein sequence ID" value="AAK71466.2"/>
    <property type="molecule type" value="Genomic_DNA"/>
</dbReference>
<dbReference type="EMBL" id="AY250089">
    <property type="protein sequence ID" value="AAP02959.2"/>
    <property type="molecule type" value="mRNA"/>
</dbReference>
<dbReference type="EMBL" id="KN293996">
    <property type="protein sequence ID" value="EEH40530.2"/>
    <property type="status" value="ALT_SEQ"/>
    <property type="molecule type" value="Genomic_DNA"/>
</dbReference>
<dbReference type="RefSeq" id="XP_002795879.2">
    <property type="nucleotide sequence ID" value="XM_002795833.2"/>
</dbReference>
<dbReference type="SMR" id="Q96VN5"/>
<dbReference type="STRING" id="502779.Q96VN5"/>
<dbReference type="MoonProt" id="Q96VN5"/>
<dbReference type="GeneID" id="9098797"/>
<dbReference type="KEGG" id="pbl:PAAG_02585"/>
<dbReference type="eggNOG" id="KOG1643">
    <property type="taxonomic scope" value="Eukaryota"/>
</dbReference>
<dbReference type="HOGENOM" id="CLU_024251_2_0_1"/>
<dbReference type="OrthoDB" id="6715177at2759"/>
<dbReference type="UniPathway" id="UPA00109">
    <property type="reaction ID" value="UER00189"/>
</dbReference>
<dbReference type="UniPathway" id="UPA00138"/>
<dbReference type="Proteomes" id="UP000002059">
    <property type="component" value="Partially assembled WGS sequence"/>
</dbReference>
<dbReference type="GO" id="GO:0005737">
    <property type="term" value="C:cytoplasm"/>
    <property type="evidence" value="ECO:0000314"/>
    <property type="project" value="CAFA"/>
</dbReference>
<dbReference type="GO" id="GO:0005829">
    <property type="term" value="C:cytosol"/>
    <property type="evidence" value="ECO:0007669"/>
    <property type="project" value="TreeGrafter"/>
</dbReference>
<dbReference type="GO" id="GO:0009277">
    <property type="term" value="C:fungal-type cell wall"/>
    <property type="evidence" value="ECO:0000314"/>
    <property type="project" value="CAFA"/>
</dbReference>
<dbReference type="GO" id="GO:1990430">
    <property type="term" value="F:extracellular matrix protein binding"/>
    <property type="evidence" value="ECO:0000314"/>
    <property type="project" value="CAFA"/>
</dbReference>
<dbReference type="GO" id="GO:0004807">
    <property type="term" value="F:triose-phosphate isomerase activity"/>
    <property type="evidence" value="ECO:0000314"/>
    <property type="project" value="UniProtKB"/>
</dbReference>
<dbReference type="GO" id="GO:0044650">
    <property type="term" value="P:adhesion of symbiont to host cell"/>
    <property type="evidence" value="ECO:0000314"/>
    <property type="project" value="CAFA"/>
</dbReference>
<dbReference type="GO" id="GO:0006094">
    <property type="term" value="P:gluconeogenesis"/>
    <property type="evidence" value="ECO:0007669"/>
    <property type="project" value="UniProtKB-UniPathway"/>
</dbReference>
<dbReference type="GO" id="GO:0046166">
    <property type="term" value="P:glyceraldehyde-3-phosphate biosynthetic process"/>
    <property type="evidence" value="ECO:0007669"/>
    <property type="project" value="TreeGrafter"/>
</dbReference>
<dbReference type="GO" id="GO:0019563">
    <property type="term" value="P:glycerol catabolic process"/>
    <property type="evidence" value="ECO:0007669"/>
    <property type="project" value="TreeGrafter"/>
</dbReference>
<dbReference type="GO" id="GO:0006096">
    <property type="term" value="P:glycolytic process"/>
    <property type="evidence" value="ECO:0000314"/>
    <property type="project" value="UniProtKB"/>
</dbReference>
<dbReference type="GO" id="GO:2000535">
    <property type="term" value="P:regulation of entry of bacterium into host cell"/>
    <property type="evidence" value="ECO:0000314"/>
    <property type="project" value="CAFA"/>
</dbReference>
<dbReference type="CDD" id="cd00311">
    <property type="entry name" value="TIM"/>
    <property type="match status" value="1"/>
</dbReference>
<dbReference type="FunFam" id="3.20.20.70:FF:000025">
    <property type="entry name" value="Triosephosphate isomerase"/>
    <property type="match status" value="1"/>
</dbReference>
<dbReference type="Gene3D" id="3.20.20.70">
    <property type="entry name" value="Aldolase class I"/>
    <property type="match status" value="1"/>
</dbReference>
<dbReference type="HAMAP" id="MF_00147_B">
    <property type="entry name" value="TIM_B"/>
    <property type="match status" value="1"/>
</dbReference>
<dbReference type="InterPro" id="IPR013785">
    <property type="entry name" value="Aldolase_TIM"/>
</dbReference>
<dbReference type="InterPro" id="IPR035990">
    <property type="entry name" value="TIM_sf"/>
</dbReference>
<dbReference type="InterPro" id="IPR022896">
    <property type="entry name" value="TrioseP_Isoase_bac/euk"/>
</dbReference>
<dbReference type="InterPro" id="IPR000652">
    <property type="entry name" value="Triosephosphate_isomerase"/>
</dbReference>
<dbReference type="InterPro" id="IPR020861">
    <property type="entry name" value="Triosephosphate_isomerase_AS"/>
</dbReference>
<dbReference type="NCBIfam" id="TIGR00419">
    <property type="entry name" value="tim"/>
    <property type="match status" value="1"/>
</dbReference>
<dbReference type="PANTHER" id="PTHR21139">
    <property type="entry name" value="TRIOSEPHOSPHATE ISOMERASE"/>
    <property type="match status" value="1"/>
</dbReference>
<dbReference type="PANTHER" id="PTHR21139:SF41">
    <property type="entry name" value="TRIOSEPHOSPHATE ISOMERASE"/>
    <property type="match status" value="1"/>
</dbReference>
<dbReference type="Pfam" id="PF00121">
    <property type="entry name" value="TIM"/>
    <property type="match status" value="1"/>
</dbReference>
<dbReference type="SUPFAM" id="SSF51351">
    <property type="entry name" value="Triosephosphate isomerase (TIM)"/>
    <property type="match status" value="1"/>
</dbReference>
<dbReference type="PROSITE" id="PS00171">
    <property type="entry name" value="TIM_1"/>
    <property type="match status" value="1"/>
</dbReference>
<dbReference type="PROSITE" id="PS51440">
    <property type="entry name" value="TIM_2"/>
    <property type="match status" value="1"/>
</dbReference>